<protein>
    <recommendedName>
        <fullName evidence="1">Deoxyribose-phosphate aldolase</fullName>
        <shortName evidence="1">DERA</shortName>
        <ecNumber evidence="1">4.1.2.4</ecNumber>
    </recommendedName>
    <alternativeName>
        <fullName evidence="1">2-deoxy-D-ribose 5-phosphate aldolase</fullName>
    </alternativeName>
    <alternativeName>
        <fullName evidence="1">Phosphodeoxyriboaldolase</fullName>
        <shortName evidence="1">Deoxyriboaldolase</shortName>
    </alternativeName>
</protein>
<accession>Q8EHK4</accession>
<gene>
    <name evidence="1" type="primary">deoC</name>
    <name type="ordered locus">SO_1217</name>
</gene>
<reference key="1">
    <citation type="journal article" date="2002" name="Nat. Biotechnol.">
        <title>Genome sequence of the dissimilatory metal ion-reducing bacterium Shewanella oneidensis.</title>
        <authorList>
            <person name="Heidelberg J.F."/>
            <person name="Paulsen I.T."/>
            <person name="Nelson K.E."/>
            <person name="Gaidos E.J."/>
            <person name="Nelson W.C."/>
            <person name="Read T.D."/>
            <person name="Eisen J.A."/>
            <person name="Seshadri R."/>
            <person name="Ward N.L."/>
            <person name="Methe B.A."/>
            <person name="Clayton R.A."/>
            <person name="Meyer T."/>
            <person name="Tsapin A."/>
            <person name="Scott J."/>
            <person name="Beanan M.J."/>
            <person name="Brinkac L.M."/>
            <person name="Daugherty S.C."/>
            <person name="DeBoy R.T."/>
            <person name="Dodson R.J."/>
            <person name="Durkin A.S."/>
            <person name="Haft D.H."/>
            <person name="Kolonay J.F."/>
            <person name="Madupu R."/>
            <person name="Peterson J.D."/>
            <person name="Umayam L.A."/>
            <person name="White O."/>
            <person name="Wolf A.M."/>
            <person name="Vamathevan J.J."/>
            <person name="Weidman J.F."/>
            <person name="Impraim M."/>
            <person name="Lee K."/>
            <person name="Berry K.J."/>
            <person name="Lee C."/>
            <person name="Mueller J."/>
            <person name="Khouri H.M."/>
            <person name="Gill J."/>
            <person name="Utterback T.R."/>
            <person name="McDonald L.A."/>
            <person name="Feldblyum T.V."/>
            <person name="Smith H.O."/>
            <person name="Venter J.C."/>
            <person name="Nealson K.H."/>
            <person name="Fraser C.M."/>
        </authorList>
    </citation>
    <scope>NUCLEOTIDE SEQUENCE [LARGE SCALE GENOMIC DNA]</scope>
    <source>
        <strain>ATCC 700550 / JCM 31522 / CIP 106686 / LMG 19005 / NCIMB 14063 / MR-1</strain>
    </source>
</reference>
<evidence type="ECO:0000255" key="1">
    <source>
        <dbReference type="HAMAP-Rule" id="MF_00592"/>
    </source>
</evidence>
<sequence length="256" mass="27445">MTDLKKAAQRAIELMDLTTLNDDDTDQKVIDLCHKAVTPAGNTAAICIYPRFIPIARKTLDELGAEDIQIATVTNFPHGNDDIAIAVLETRAAVAYGADEVDVVFPYRALMEGNETVGYELVKACKEACGEVLLKVIIESGVLADPVLIRRASELSIEAGADFIKTSTGKVPVNATLEAAEIMLTVISEKNTKVGFKPAGGVRDAAQAAEFLGVAERILGADWVSPRTFRFGASSLLNSLLHTLELADAPKRTQGY</sequence>
<name>DEOC_SHEON</name>
<dbReference type="EC" id="4.1.2.4" evidence="1"/>
<dbReference type="EMBL" id="AE014299">
    <property type="protein sequence ID" value="AAN54285.1"/>
    <property type="molecule type" value="Genomic_DNA"/>
</dbReference>
<dbReference type="RefSeq" id="NP_716840.1">
    <property type="nucleotide sequence ID" value="NC_004347.2"/>
</dbReference>
<dbReference type="RefSeq" id="WP_011071446.1">
    <property type="nucleotide sequence ID" value="NC_004347.2"/>
</dbReference>
<dbReference type="SMR" id="Q8EHK4"/>
<dbReference type="STRING" id="211586.SO_1217"/>
<dbReference type="PaxDb" id="211586-SO_1217"/>
<dbReference type="KEGG" id="son:SO_1217"/>
<dbReference type="PATRIC" id="fig|211586.12.peg.1169"/>
<dbReference type="eggNOG" id="COG0274">
    <property type="taxonomic scope" value="Bacteria"/>
</dbReference>
<dbReference type="HOGENOM" id="CLU_053595_3_1_6"/>
<dbReference type="OrthoDB" id="6579831at2"/>
<dbReference type="PhylomeDB" id="Q8EHK4"/>
<dbReference type="BioCyc" id="SONE211586:G1GMP-1128-MONOMER"/>
<dbReference type="UniPathway" id="UPA00002">
    <property type="reaction ID" value="UER00468"/>
</dbReference>
<dbReference type="Proteomes" id="UP000008186">
    <property type="component" value="Chromosome"/>
</dbReference>
<dbReference type="GO" id="GO:0005737">
    <property type="term" value="C:cytoplasm"/>
    <property type="evidence" value="ECO:0007669"/>
    <property type="project" value="UniProtKB-SubCell"/>
</dbReference>
<dbReference type="GO" id="GO:0004139">
    <property type="term" value="F:deoxyribose-phosphate aldolase activity"/>
    <property type="evidence" value="ECO:0000318"/>
    <property type="project" value="GO_Central"/>
</dbReference>
<dbReference type="GO" id="GO:0006018">
    <property type="term" value="P:2-deoxyribose 1-phosphate catabolic process"/>
    <property type="evidence" value="ECO:0007669"/>
    <property type="project" value="UniProtKB-UniRule"/>
</dbReference>
<dbReference type="GO" id="GO:0016052">
    <property type="term" value="P:carbohydrate catabolic process"/>
    <property type="evidence" value="ECO:0000318"/>
    <property type="project" value="GO_Central"/>
</dbReference>
<dbReference type="GO" id="GO:0009264">
    <property type="term" value="P:deoxyribonucleotide catabolic process"/>
    <property type="evidence" value="ECO:0000318"/>
    <property type="project" value="GO_Central"/>
</dbReference>
<dbReference type="CDD" id="cd00959">
    <property type="entry name" value="DeoC"/>
    <property type="match status" value="1"/>
</dbReference>
<dbReference type="Gene3D" id="3.20.20.70">
    <property type="entry name" value="Aldolase class I"/>
    <property type="match status" value="1"/>
</dbReference>
<dbReference type="HAMAP" id="MF_00592">
    <property type="entry name" value="DeoC_type2"/>
    <property type="match status" value="1"/>
</dbReference>
<dbReference type="InterPro" id="IPR013785">
    <property type="entry name" value="Aldolase_TIM"/>
</dbReference>
<dbReference type="InterPro" id="IPR011343">
    <property type="entry name" value="DeoC"/>
</dbReference>
<dbReference type="InterPro" id="IPR002915">
    <property type="entry name" value="DeoC/FbaB/LacD_aldolase"/>
</dbReference>
<dbReference type="InterPro" id="IPR023649">
    <property type="entry name" value="DeoC_typeII"/>
</dbReference>
<dbReference type="NCBIfam" id="TIGR00126">
    <property type="entry name" value="deoC"/>
    <property type="match status" value="1"/>
</dbReference>
<dbReference type="PANTHER" id="PTHR10889">
    <property type="entry name" value="DEOXYRIBOSE-PHOSPHATE ALDOLASE"/>
    <property type="match status" value="1"/>
</dbReference>
<dbReference type="PANTHER" id="PTHR10889:SF3">
    <property type="entry name" value="DEOXYRIBOSE-PHOSPHATE ALDOLASE"/>
    <property type="match status" value="1"/>
</dbReference>
<dbReference type="Pfam" id="PF01791">
    <property type="entry name" value="DeoC"/>
    <property type="match status" value="1"/>
</dbReference>
<dbReference type="PIRSF" id="PIRSF001357">
    <property type="entry name" value="DeoC"/>
    <property type="match status" value="1"/>
</dbReference>
<dbReference type="SMART" id="SM01133">
    <property type="entry name" value="DeoC"/>
    <property type="match status" value="1"/>
</dbReference>
<dbReference type="SUPFAM" id="SSF51569">
    <property type="entry name" value="Aldolase"/>
    <property type="match status" value="1"/>
</dbReference>
<comment type="function">
    <text evidence="1">Catalyzes a reversible aldol reaction between acetaldehyde and D-glyceraldehyde 3-phosphate to generate 2-deoxy-D-ribose 5-phosphate.</text>
</comment>
<comment type="catalytic activity">
    <reaction evidence="1">
        <text>2-deoxy-D-ribose 5-phosphate = D-glyceraldehyde 3-phosphate + acetaldehyde</text>
        <dbReference type="Rhea" id="RHEA:12821"/>
        <dbReference type="ChEBI" id="CHEBI:15343"/>
        <dbReference type="ChEBI" id="CHEBI:59776"/>
        <dbReference type="ChEBI" id="CHEBI:62877"/>
        <dbReference type="EC" id="4.1.2.4"/>
    </reaction>
</comment>
<comment type="pathway">
    <text evidence="1">Carbohydrate degradation; 2-deoxy-D-ribose 1-phosphate degradation; D-glyceraldehyde 3-phosphate and acetaldehyde from 2-deoxy-alpha-D-ribose 1-phosphate: step 2/2.</text>
</comment>
<comment type="subcellular location">
    <subcellularLocation>
        <location evidence="1">Cytoplasm</location>
    </subcellularLocation>
</comment>
<comment type="similarity">
    <text evidence="1">Belongs to the DeoC/FbaB aldolase family. DeoC type 2 subfamily.</text>
</comment>
<proteinExistence type="inferred from homology"/>
<organism>
    <name type="scientific">Shewanella oneidensis (strain ATCC 700550 / JCM 31522 / CIP 106686 / LMG 19005 / NCIMB 14063 / MR-1)</name>
    <dbReference type="NCBI Taxonomy" id="211586"/>
    <lineage>
        <taxon>Bacteria</taxon>
        <taxon>Pseudomonadati</taxon>
        <taxon>Pseudomonadota</taxon>
        <taxon>Gammaproteobacteria</taxon>
        <taxon>Alteromonadales</taxon>
        <taxon>Shewanellaceae</taxon>
        <taxon>Shewanella</taxon>
    </lineage>
</organism>
<keyword id="KW-0963">Cytoplasm</keyword>
<keyword id="KW-0456">Lyase</keyword>
<keyword id="KW-1185">Reference proteome</keyword>
<keyword id="KW-0704">Schiff base</keyword>
<feature type="chain" id="PRO_0000057303" description="Deoxyribose-phosphate aldolase">
    <location>
        <begin position="1"/>
        <end position="256"/>
    </location>
</feature>
<feature type="active site" description="Proton donor/acceptor" evidence="1">
    <location>
        <position position="102"/>
    </location>
</feature>
<feature type="active site" description="Schiff-base intermediate with acetaldehyde" evidence="1">
    <location>
        <position position="165"/>
    </location>
</feature>
<feature type="active site" description="Proton donor/acceptor" evidence="1">
    <location>
        <position position="197"/>
    </location>
</feature>